<organism>
    <name type="scientific">Geobacillus kaustophilus (strain HTA426)</name>
    <dbReference type="NCBI Taxonomy" id="235909"/>
    <lineage>
        <taxon>Bacteria</taxon>
        <taxon>Bacillati</taxon>
        <taxon>Bacillota</taxon>
        <taxon>Bacilli</taxon>
        <taxon>Bacillales</taxon>
        <taxon>Anoxybacillaceae</taxon>
        <taxon>Geobacillus</taxon>
        <taxon>Geobacillus thermoleovorans group</taxon>
    </lineage>
</organism>
<feature type="chain" id="PRO_0000160359" description="ATP-dependent Clp protease ATP-binding subunit ClpX">
    <location>
        <begin position="1"/>
        <end position="421"/>
    </location>
</feature>
<feature type="domain" description="ClpX-type ZB" evidence="2">
    <location>
        <begin position="1"/>
        <end position="54"/>
    </location>
</feature>
<feature type="binding site" evidence="2">
    <location>
        <position position="13"/>
    </location>
    <ligand>
        <name>Zn(2+)</name>
        <dbReference type="ChEBI" id="CHEBI:29105"/>
    </ligand>
</feature>
<feature type="binding site" evidence="2">
    <location>
        <position position="16"/>
    </location>
    <ligand>
        <name>Zn(2+)</name>
        <dbReference type="ChEBI" id="CHEBI:29105"/>
    </ligand>
</feature>
<feature type="binding site" evidence="2">
    <location>
        <position position="35"/>
    </location>
    <ligand>
        <name>Zn(2+)</name>
        <dbReference type="ChEBI" id="CHEBI:29105"/>
    </ligand>
</feature>
<feature type="binding site" evidence="2">
    <location>
        <position position="38"/>
    </location>
    <ligand>
        <name>Zn(2+)</name>
        <dbReference type="ChEBI" id="CHEBI:29105"/>
    </ligand>
</feature>
<feature type="binding site" evidence="1">
    <location>
        <begin position="117"/>
        <end position="124"/>
    </location>
    <ligand>
        <name>ATP</name>
        <dbReference type="ChEBI" id="CHEBI:30616"/>
    </ligand>
</feature>
<proteinExistence type="inferred from homology"/>
<comment type="function">
    <text evidence="1">ATP-dependent specificity component of the Clp protease. It directs the protease to specific substrates. Can perform chaperone functions in the absence of ClpP.</text>
</comment>
<comment type="subunit">
    <text evidence="1">Component of the ClpX-ClpP complex. Forms a hexameric ring that, in the presence of ATP, binds to fourteen ClpP subunits assembled into a disk-like structure with a central cavity, resembling the structure of eukaryotic proteasomes.</text>
</comment>
<comment type="similarity">
    <text evidence="1">Belongs to the ClpX chaperone family.</text>
</comment>
<name>CLPX_GEOKA</name>
<keyword id="KW-0067">ATP-binding</keyword>
<keyword id="KW-0143">Chaperone</keyword>
<keyword id="KW-0479">Metal-binding</keyword>
<keyword id="KW-0547">Nucleotide-binding</keyword>
<keyword id="KW-1185">Reference proteome</keyword>
<keyword id="KW-0862">Zinc</keyword>
<gene>
    <name evidence="1" type="primary">clpX</name>
    <name type="ordered locus">GK2652</name>
</gene>
<evidence type="ECO:0000255" key="1">
    <source>
        <dbReference type="HAMAP-Rule" id="MF_00175"/>
    </source>
</evidence>
<evidence type="ECO:0000255" key="2">
    <source>
        <dbReference type="PROSITE-ProRule" id="PRU01250"/>
    </source>
</evidence>
<reference key="1">
    <citation type="journal article" date="2004" name="Nucleic Acids Res.">
        <title>Thermoadaptation trait revealed by the genome sequence of thermophilic Geobacillus kaustophilus.</title>
        <authorList>
            <person name="Takami H."/>
            <person name="Takaki Y."/>
            <person name="Chee G.-J."/>
            <person name="Nishi S."/>
            <person name="Shimamura S."/>
            <person name="Suzuki H."/>
            <person name="Matsui S."/>
            <person name="Uchiyama I."/>
        </authorList>
    </citation>
    <scope>NUCLEOTIDE SEQUENCE [LARGE SCALE GENOMIC DNA]</scope>
    <source>
        <strain>HTA426</strain>
    </source>
</reference>
<accession>Q5KWJ9</accession>
<protein>
    <recommendedName>
        <fullName evidence="1">ATP-dependent Clp protease ATP-binding subunit ClpX</fullName>
    </recommendedName>
</protein>
<sequence>MFKFNDEKGQLKCSFCGKTQDQVRKLVAGPGVYICDECIELCTEIVEEELGNEEEFEFKDVPKPLEIREILDEYVIGQDEAKKSLAVAVYNHYKRINSGSKIDDVELSKSNILMIGPTGSGKTLLAQTLARILNVPFAIADATSLTEAGYVGEDVENILLKLIQAADYDVERAEKGIIYIDEIDKIARKSENPSITRDVSGEGVQQALLKILEGTIASVPPQGGRKHPHQEFIQIDTTNILFICGGAFDGIEPIIKRRLGKKVIGFGAEMNQTDVDEKNLLSKVLPEDLLKFGLIPEFIGRLPVITTLEPLDEQALIDILTKPKNAIVKQYQKMLELDGVELEFEEAALREIAKKAIERKTGARGLRSIIEGIMLDVMFELPSREDVQKCIITLDTVRGTKPPTLIRHDGTVIELERKTSA</sequence>
<dbReference type="EMBL" id="BA000043">
    <property type="protein sequence ID" value="BAD76937.1"/>
    <property type="molecule type" value="Genomic_DNA"/>
</dbReference>
<dbReference type="RefSeq" id="WP_011232128.1">
    <property type="nucleotide sequence ID" value="NC_006510.1"/>
</dbReference>
<dbReference type="SMR" id="Q5KWJ9"/>
<dbReference type="STRING" id="235909.GK2652"/>
<dbReference type="GeneID" id="32064554"/>
<dbReference type="KEGG" id="gka:GK2652"/>
<dbReference type="eggNOG" id="COG1219">
    <property type="taxonomic scope" value="Bacteria"/>
</dbReference>
<dbReference type="HOGENOM" id="CLU_014218_8_2_9"/>
<dbReference type="Proteomes" id="UP000001172">
    <property type="component" value="Chromosome"/>
</dbReference>
<dbReference type="GO" id="GO:0009376">
    <property type="term" value="C:HslUV protease complex"/>
    <property type="evidence" value="ECO:0007669"/>
    <property type="project" value="TreeGrafter"/>
</dbReference>
<dbReference type="GO" id="GO:0005524">
    <property type="term" value="F:ATP binding"/>
    <property type="evidence" value="ECO:0007669"/>
    <property type="project" value="UniProtKB-UniRule"/>
</dbReference>
<dbReference type="GO" id="GO:0016887">
    <property type="term" value="F:ATP hydrolysis activity"/>
    <property type="evidence" value="ECO:0007669"/>
    <property type="project" value="InterPro"/>
</dbReference>
<dbReference type="GO" id="GO:0140662">
    <property type="term" value="F:ATP-dependent protein folding chaperone"/>
    <property type="evidence" value="ECO:0007669"/>
    <property type="project" value="InterPro"/>
</dbReference>
<dbReference type="GO" id="GO:0046983">
    <property type="term" value="F:protein dimerization activity"/>
    <property type="evidence" value="ECO:0007669"/>
    <property type="project" value="InterPro"/>
</dbReference>
<dbReference type="GO" id="GO:0051082">
    <property type="term" value="F:unfolded protein binding"/>
    <property type="evidence" value="ECO:0007669"/>
    <property type="project" value="UniProtKB-UniRule"/>
</dbReference>
<dbReference type="GO" id="GO:0008270">
    <property type="term" value="F:zinc ion binding"/>
    <property type="evidence" value="ECO:0007669"/>
    <property type="project" value="InterPro"/>
</dbReference>
<dbReference type="GO" id="GO:0051301">
    <property type="term" value="P:cell division"/>
    <property type="evidence" value="ECO:0007669"/>
    <property type="project" value="TreeGrafter"/>
</dbReference>
<dbReference type="GO" id="GO:0051603">
    <property type="term" value="P:proteolysis involved in protein catabolic process"/>
    <property type="evidence" value="ECO:0007669"/>
    <property type="project" value="TreeGrafter"/>
</dbReference>
<dbReference type="CDD" id="cd19497">
    <property type="entry name" value="RecA-like_ClpX"/>
    <property type="match status" value="1"/>
</dbReference>
<dbReference type="FunFam" id="1.10.8.60:FF:000002">
    <property type="entry name" value="ATP-dependent Clp protease ATP-binding subunit ClpX"/>
    <property type="match status" value="1"/>
</dbReference>
<dbReference type="FunFam" id="3.40.50.300:FF:000005">
    <property type="entry name" value="ATP-dependent Clp protease ATP-binding subunit ClpX"/>
    <property type="match status" value="1"/>
</dbReference>
<dbReference type="Gene3D" id="1.10.8.60">
    <property type="match status" value="1"/>
</dbReference>
<dbReference type="Gene3D" id="6.20.220.10">
    <property type="entry name" value="ClpX chaperone, C4-type zinc finger domain"/>
    <property type="match status" value="1"/>
</dbReference>
<dbReference type="Gene3D" id="3.40.50.300">
    <property type="entry name" value="P-loop containing nucleotide triphosphate hydrolases"/>
    <property type="match status" value="1"/>
</dbReference>
<dbReference type="HAMAP" id="MF_00175">
    <property type="entry name" value="ClpX"/>
    <property type="match status" value="1"/>
</dbReference>
<dbReference type="InterPro" id="IPR003593">
    <property type="entry name" value="AAA+_ATPase"/>
</dbReference>
<dbReference type="InterPro" id="IPR050052">
    <property type="entry name" value="ATP-dep_Clp_protease_ClpX"/>
</dbReference>
<dbReference type="InterPro" id="IPR003959">
    <property type="entry name" value="ATPase_AAA_core"/>
</dbReference>
<dbReference type="InterPro" id="IPR019489">
    <property type="entry name" value="Clp_ATPase_C"/>
</dbReference>
<dbReference type="InterPro" id="IPR004487">
    <property type="entry name" value="Clp_protease_ATP-bd_su_ClpX"/>
</dbReference>
<dbReference type="InterPro" id="IPR046425">
    <property type="entry name" value="ClpX_bact"/>
</dbReference>
<dbReference type="InterPro" id="IPR027417">
    <property type="entry name" value="P-loop_NTPase"/>
</dbReference>
<dbReference type="InterPro" id="IPR010603">
    <property type="entry name" value="Znf_CppX_C4"/>
</dbReference>
<dbReference type="InterPro" id="IPR038366">
    <property type="entry name" value="Znf_CppX_C4_sf"/>
</dbReference>
<dbReference type="NCBIfam" id="TIGR00382">
    <property type="entry name" value="clpX"/>
    <property type="match status" value="1"/>
</dbReference>
<dbReference type="NCBIfam" id="NF003745">
    <property type="entry name" value="PRK05342.1"/>
    <property type="match status" value="1"/>
</dbReference>
<dbReference type="PANTHER" id="PTHR48102:SF7">
    <property type="entry name" value="ATP-DEPENDENT CLP PROTEASE ATP-BINDING SUBUNIT CLPX-LIKE, MITOCHONDRIAL"/>
    <property type="match status" value="1"/>
</dbReference>
<dbReference type="PANTHER" id="PTHR48102">
    <property type="entry name" value="ATP-DEPENDENT CLP PROTEASE ATP-BINDING SUBUNIT CLPX-LIKE, MITOCHONDRIAL-RELATED"/>
    <property type="match status" value="1"/>
</dbReference>
<dbReference type="Pfam" id="PF07724">
    <property type="entry name" value="AAA_2"/>
    <property type="match status" value="1"/>
</dbReference>
<dbReference type="Pfam" id="PF10431">
    <property type="entry name" value="ClpB_D2-small"/>
    <property type="match status" value="1"/>
</dbReference>
<dbReference type="Pfam" id="PF06689">
    <property type="entry name" value="zf-C4_ClpX"/>
    <property type="match status" value="1"/>
</dbReference>
<dbReference type="SMART" id="SM00382">
    <property type="entry name" value="AAA"/>
    <property type="match status" value="1"/>
</dbReference>
<dbReference type="SMART" id="SM01086">
    <property type="entry name" value="ClpB_D2-small"/>
    <property type="match status" value="1"/>
</dbReference>
<dbReference type="SMART" id="SM00994">
    <property type="entry name" value="zf-C4_ClpX"/>
    <property type="match status" value="1"/>
</dbReference>
<dbReference type="SUPFAM" id="SSF57716">
    <property type="entry name" value="Glucocorticoid receptor-like (DNA-binding domain)"/>
    <property type="match status" value="1"/>
</dbReference>
<dbReference type="SUPFAM" id="SSF52540">
    <property type="entry name" value="P-loop containing nucleoside triphosphate hydrolases"/>
    <property type="match status" value="1"/>
</dbReference>
<dbReference type="PROSITE" id="PS51902">
    <property type="entry name" value="CLPX_ZB"/>
    <property type="match status" value="1"/>
</dbReference>